<name>BMI1_CHICK</name>
<feature type="chain" id="PRO_0000296629" description="Polycomb complex protein BMI-1">
    <location>
        <begin position="1"/>
        <end position="326"/>
    </location>
</feature>
<feature type="zinc finger region" description="RING-type" evidence="3">
    <location>
        <begin position="18"/>
        <end position="57"/>
    </location>
</feature>
<feature type="region of interest" description="Interaction with PHC2" evidence="1">
    <location>
        <begin position="162"/>
        <end position="182"/>
    </location>
</feature>
<feature type="region of interest" description="Interaction with E4F1" evidence="1">
    <location>
        <begin position="164"/>
        <end position="228"/>
    </location>
</feature>
<feature type="region of interest" description="Disordered" evidence="4">
    <location>
        <begin position="236"/>
        <end position="326"/>
    </location>
</feature>
<feature type="short sequence motif" description="Nuclear localization signal" evidence="2">
    <location>
        <begin position="81"/>
        <end position="95"/>
    </location>
</feature>
<feature type="compositionally biased region" description="Low complexity" evidence="4">
    <location>
        <begin position="265"/>
        <end position="278"/>
    </location>
</feature>
<feature type="compositionally biased region" description="Polar residues" evidence="4">
    <location>
        <begin position="279"/>
        <end position="310"/>
    </location>
</feature>
<feature type="compositionally biased region" description="Low complexity" evidence="4">
    <location>
        <begin position="315"/>
        <end position="326"/>
    </location>
</feature>
<gene>
    <name type="primary">BMI1</name>
    <name type="synonym">PCGF4</name>
</gene>
<protein>
    <recommendedName>
        <fullName>Polycomb complex protein BMI-1</fullName>
    </recommendedName>
    <alternativeName>
        <fullName>Polycomb group RING finger protein 4</fullName>
    </alternativeName>
</protein>
<accession>Q5SDR3</accession>
<keyword id="KW-0156">Chromatin regulator</keyword>
<keyword id="KW-0963">Cytoplasm</keyword>
<keyword id="KW-0479">Metal-binding</keyword>
<keyword id="KW-0539">Nucleus</keyword>
<keyword id="KW-1185">Reference proteome</keyword>
<keyword id="KW-0678">Repressor</keyword>
<keyword id="KW-0804">Transcription</keyword>
<keyword id="KW-0805">Transcription regulation</keyword>
<keyword id="KW-0862">Zinc</keyword>
<keyword id="KW-0863">Zinc-finger</keyword>
<dbReference type="EMBL" id="AY616032">
    <property type="protein sequence ID" value="AAU25821.1"/>
    <property type="molecule type" value="mRNA"/>
</dbReference>
<dbReference type="RefSeq" id="NP_001007989.1">
    <property type="nucleotide sequence ID" value="NM_001007988.3"/>
</dbReference>
<dbReference type="RefSeq" id="XP_046767700.1">
    <property type="nucleotide sequence ID" value="XM_046911744.1"/>
</dbReference>
<dbReference type="RefSeq" id="XP_046782427.1">
    <property type="nucleotide sequence ID" value="XM_046926471.1"/>
</dbReference>
<dbReference type="RefSeq" id="XP_046782431.1">
    <property type="nucleotide sequence ID" value="XM_046926475.1"/>
</dbReference>
<dbReference type="SMR" id="Q5SDR3"/>
<dbReference type="FunCoup" id="Q5SDR3">
    <property type="interactions" value="540"/>
</dbReference>
<dbReference type="STRING" id="9031.ENSGALP00000051910"/>
<dbReference type="PaxDb" id="9031-ENSGALP00000041259"/>
<dbReference type="Ensembl" id="ENSGALT00010009779.1">
    <property type="protein sequence ID" value="ENSGALP00010005716.1"/>
    <property type="gene ID" value="ENSGALG00010004188.1"/>
</dbReference>
<dbReference type="GeneID" id="493647"/>
<dbReference type="KEGG" id="gga:493647"/>
<dbReference type="CTD" id="648"/>
<dbReference type="VEuPathDB" id="HostDB:geneid_493647"/>
<dbReference type="eggNOG" id="KOG2660">
    <property type="taxonomic scope" value="Eukaryota"/>
</dbReference>
<dbReference type="GeneTree" id="ENSGT00940000156042"/>
<dbReference type="HOGENOM" id="CLU_046427_0_0_1"/>
<dbReference type="InParanoid" id="Q5SDR3"/>
<dbReference type="OMA" id="QANDKRY"/>
<dbReference type="OrthoDB" id="1305878at2759"/>
<dbReference type="PhylomeDB" id="Q5SDR3"/>
<dbReference type="Reactome" id="R-GGA-2559580">
    <property type="pathway name" value="Oxidative Stress Induced Senescence"/>
</dbReference>
<dbReference type="Reactome" id="R-GGA-3108214">
    <property type="pathway name" value="SUMOylation of DNA damage response and repair proteins"/>
</dbReference>
<dbReference type="Reactome" id="R-GGA-3899300">
    <property type="pathway name" value="SUMOylation of transcription cofactors"/>
</dbReference>
<dbReference type="Reactome" id="R-GGA-4551638">
    <property type="pathway name" value="SUMOylation of chromatin organization proteins"/>
</dbReference>
<dbReference type="Reactome" id="R-GGA-4570464">
    <property type="pathway name" value="SUMOylation of RNA binding proteins"/>
</dbReference>
<dbReference type="Reactome" id="R-GGA-8939243">
    <property type="pathway name" value="RUNX1 interacts with co-factors whose precise effect on RUNX1 targets is not known"/>
</dbReference>
<dbReference type="Reactome" id="R-GGA-8943724">
    <property type="pathway name" value="Regulation of PTEN gene transcription"/>
</dbReference>
<dbReference type="Reactome" id="R-GGA-8953750">
    <property type="pathway name" value="Transcriptional Regulation by E2F6"/>
</dbReference>
<dbReference type="PRO" id="PR:Q5SDR3"/>
<dbReference type="Proteomes" id="UP000000539">
    <property type="component" value="Chromosome 2"/>
</dbReference>
<dbReference type="Bgee" id="ENSGALG00000041267">
    <property type="expression patterns" value="Expressed in ovary and 13 other cell types or tissues"/>
</dbReference>
<dbReference type="GO" id="GO:0005737">
    <property type="term" value="C:cytoplasm"/>
    <property type="evidence" value="ECO:0007669"/>
    <property type="project" value="UniProtKB-SubCell"/>
</dbReference>
<dbReference type="GO" id="GO:0031519">
    <property type="term" value="C:PcG protein complex"/>
    <property type="evidence" value="ECO:0000250"/>
    <property type="project" value="UniProtKB"/>
</dbReference>
<dbReference type="GO" id="GO:0035102">
    <property type="term" value="C:PRC1 complex"/>
    <property type="evidence" value="ECO:0000318"/>
    <property type="project" value="GO_Central"/>
</dbReference>
<dbReference type="GO" id="GO:0000151">
    <property type="term" value="C:ubiquitin ligase complex"/>
    <property type="evidence" value="ECO:0000250"/>
    <property type="project" value="UniProtKB"/>
</dbReference>
<dbReference type="GO" id="GO:1990841">
    <property type="term" value="F:promoter-specific chromatin binding"/>
    <property type="evidence" value="ECO:0000250"/>
    <property type="project" value="UniProtKB"/>
</dbReference>
<dbReference type="GO" id="GO:0008270">
    <property type="term" value="F:zinc ion binding"/>
    <property type="evidence" value="ECO:0000250"/>
    <property type="project" value="UniProtKB"/>
</dbReference>
<dbReference type="GO" id="GO:0006338">
    <property type="term" value="P:chromatin remodeling"/>
    <property type="evidence" value="ECO:0000250"/>
    <property type="project" value="UniProtKB"/>
</dbReference>
<dbReference type="GO" id="GO:0045814">
    <property type="term" value="P:negative regulation of gene expression, epigenetic"/>
    <property type="evidence" value="ECO:0000250"/>
    <property type="project" value="UniProtKB"/>
</dbReference>
<dbReference type="GO" id="GO:0000122">
    <property type="term" value="P:negative regulation of transcription by RNA polymerase II"/>
    <property type="evidence" value="ECO:0000318"/>
    <property type="project" value="GO_Central"/>
</dbReference>
<dbReference type="GO" id="GO:0051443">
    <property type="term" value="P:positive regulation of ubiquitin-protein transferase activity"/>
    <property type="evidence" value="ECO:0000250"/>
    <property type="project" value="UniProtKB"/>
</dbReference>
<dbReference type="CDD" id="cd17165">
    <property type="entry name" value="RAWUL_PCGF4"/>
    <property type="match status" value="1"/>
</dbReference>
<dbReference type="CDD" id="cd16736">
    <property type="entry name" value="RING-HC_PCGF4"/>
    <property type="match status" value="1"/>
</dbReference>
<dbReference type="FunFam" id="3.10.20.90:FF:000106">
    <property type="entry name" value="Polycomb complex protein BMI-1"/>
    <property type="match status" value="1"/>
</dbReference>
<dbReference type="FunFam" id="3.30.40.10:FF:000082">
    <property type="entry name" value="Polycomb group ring finger 2"/>
    <property type="match status" value="1"/>
</dbReference>
<dbReference type="Gene3D" id="3.10.20.90">
    <property type="entry name" value="Phosphatidylinositol 3-kinase Catalytic Subunit, Chain A, domain 1"/>
    <property type="match status" value="1"/>
</dbReference>
<dbReference type="Gene3D" id="3.30.40.10">
    <property type="entry name" value="Zinc/RING finger domain, C3HC4 (zinc finger)"/>
    <property type="match status" value="1"/>
</dbReference>
<dbReference type="InterPro" id="IPR032443">
    <property type="entry name" value="RAWUL"/>
</dbReference>
<dbReference type="InterPro" id="IPR001841">
    <property type="entry name" value="Znf_RING"/>
</dbReference>
<dbReference type="InterPro" id="IPR013083">
    <property type="entry name" value="Znf_RING/FYVE/PHD"/>
</dbReference>
<dbReference type="InterPro" id="IPR017907">
    <property type="entry name" value="Znf_RING_CS"/>
</dbReference>
<dbReference type="PANTHER" id="PTHR10825:SF21">
    <property type="entry name" value="POLYCOMB COMPLEX PROTEIN BMI-1"/>
    <property type="match status" value="1"/>
</dbReference>
<dbReference type="PANTHER" id="PTHR10825">
    <property type="entry name" value="RING FINGER DOMAIN-CONTAINING, POLYCOMB GROUP COMPONENT"/>
    <property type="match status" value="1"/>
</dbReference>
<dbReference type="Pfam" id="PF16207">
    <property type="entry name" value="RAWUL"/>
    <property type="match status" value="1"/>
</dbReference>
<dbReference type="Pfam" id="PF13923">
    <property type="entry name" value="zf-C3HC4_2"/>
    <property type="match status" value="1"/>
</dbReference>
<dbReference type="SMART" id="SM00184">
    <property type="entry name" value="RING"/>
    <property type="match status" value="1"/>
</dbReference>
<dbReference type="SUPFAM" id="SSF57850">
    <property type="entry name" value="RING/U-box"/>
    <property type="match status" value="1"/>
</dbReference>
<dbReference type="PROSITE" id="PS00518">
    <property type="entry name" value="ZF_RING_1"/>
    <property type="match status" value="1"/>
</dbReference>
<dbReference type="PROSITE" id="PS50089">
    <property type="entry name" value="ZF_RING_2"/>
    <property type="match status" value="1"/>
</dbReference>
<proteinExistence type="evidence at transcript level"/>
<comment type="function">
    <text evidence="1">Component of a Polycomb group (PcG) multiprotein PRC1-like complex, a complex class required to maintain the transcriptionally repressive state of many genes, including Hox genes, throughout development. PcG PRC1 complex acts via chromatin remodeling and modification of histones; it mediates monoubiquitination of histone H2A 'Lys-119', rendering chromatin heritably changed in its expressibility. In the PRC1-like complex, regulates the E3 ubiquitin-protein ligase activity of RNF2/RING2.</text>
</comment>
<comment type="subunit">
    <text evidence="1">Component of a PRC1-like complex.</text>
</comment>
<comment type="subcellular location">
    <subcellularLocation>
        <location evidence="1">Nucleus</location>
    </subcellularLocation>
    <subcellularLocation>
        <location evidence="1">Cytoplasm</location>
    </subcellularLocation>
</comment>
<comment type="developmental stage">
    <text evidence="5">During early nervous system development, robust expression was observed in the open neural plate and later in the dorsal neural tube and much of the brain. Also present in the developing heart primordia and the sensory placodes.</text>
</comment>
<sequence length="326" mass="36885">MHRTTRIKITELNPHLMCVLCGGYFIDATTIIECLHSFCKTCIVRYLETSKYCPICDVQVHKTRPLLNIRSDKTLQDIVYKLVPGLFKNEMKRRRDFYAAHPSADAANGSNEDRGEVADEDKRIITDDEIISLSIEFFDQNRLERKGNKEKEKSKEEVNDKRYLRCPAAMTVMHLRKFLRSKMDIPNTFQIDVMYEEEPLKDYYTLMDIAYIYTWRRNGPLPLKYRVRPTCKRMKIGHQREGLSNSGELESDSGSDKASSPAGGLPSTSSCLPSPSTPVQSPHPQFPHISSTMNGTSSSPGSNHQSSFTNRARKSSINGSSATSSG</sequence>
<evidence type="ECO:0000250" key="1">
    <source>
        <dbReference type="UniProtKB" id="P35226"/>
    </source>
</evidence>
<evidence type="ECO:0000255" key="2"/>
<evidence type="ECO:0000255" key="3">
    <source>
        <dbReference type="PROSITE-ProRule" id="PRU00175"/>
    </source>
</evidence>
<evidence type="ECO:0000256" key="4">
    <source>
        <dbReference type="SAM" id="MobiDB-lite"/>
    </source>
</evidence>
<evidence type="ECO:0000269" key="5">
    <source>
    </source>
</evidence>
<reference key="1">
    <citation type="journal article" date="2004" name="Gene Expr. Patterns">
        <title>Expression of the polycomb group gene bmi-1 in the early chick embryo.</title>
        <authorList>
            <person name="Fraser P.E."/>
            <person name="Sauka-Spengler T."/>
        </authorList>
    </citation>
    <scope>NUCLEOTIDE SEQUENCE [MRNA]</scope>
    <scope>DEVELOPMENTAL STAGE</scope>
    <source>
        <strain>White leghorn</strain>
        <tissue>Embryo</tissue>
    </source>
</reference>
<organism>
    <name type="scientific">Gallus gallus</name>
    <name type="common">Chicken</name>
    <dbReference type="NCBI Taxonomy" id="9031"/>
    <lineage>
        <taxon>Eukaryota</taxon>
        <taxon>Metazoa</taxon>
        <taxon>Chordata</taxon>
        <taxon>Craniata</taxon>
        <taxon>Vertebrata</taxon>
        <taxon>Euteleostomi</taxon>
        <taxon>Archelosauria</taxon>
        <taxon>Archosauria</taxon>
        <taxon>Dinosauria</taxon>
        <taxon>Saurischia</taxon>
        <taxon>Theropoda</taxon>
        <taxon>Coelurosauria</taxon>
        <taxon>Aves</taxon>
        <taxon>Neognathae</taxon>
        <taxon>Galloanserae</taxon>
        <taxon>Galliformes</taxon>
        <taxon>Phasianidae</taxon>
        <taxon>Phasianinae</taxon>
        <taxon>Gallus</taxon>
    </lineage>
</organism>